<evidence type="ECO:0000255" key="1">
    <source>
        <dbReference type="HAMAP-Rule" id="MF_00438"/>
    </source>
</evidence>
<name>PSBM_PELHO</name>
<gene>
    <name evidence="1" type="primary">psbM</name>
</gene>
<geneLocation type="chloroplast"/>
<accession>Q06FW7</accession>
<feature type="chain" id="PRO_0000276249" description="Photosystem II reaction center protein M">
    <location>
        <begin position="1"/>
        <end position="37"/>
    </location>
</feature>
<feature type="transmembrane region" description="Helical" evidence="1">
    <location>
        <begin position="5"/>
        <end position="25"/>
    </location>
</feature>
<protein>
    <recommendedName>
        <fullName evidence="1">Photosystem II reaction center protein M</fullName>
        <shortName evidence="1">PSII-M</shortName>
    </recommendedName>
</protein>
<keyword id="KW-0150">Chloroplast</keyword>
<keyword id="KW-0472">Membrane</keyword>
<keyword id="KW-0602">Photosynthesis</keyword>
<keyword id="KW-0604">Photosystem II</keyword>
<keyword id="KW-0934">Plastid</keyword>
<keyword id="KW-0674">Reaction center</keyword>
<keyword id="KW-0793">Thylakoid</keyword>
<keyword id="KW-0812">Transmembrane</keyword>
<keyword id="KW-1133">Transmembrane helix</keyword>
<comment type="function">
    <text evidence="1">One of the components of the core complex of photosystem II (PSII). PSII is a light-driven water:plastoquinone oxidoreductase that uses light energy to abstract electrons from H(2)O, generating O(2) and a proton gradient subsequently used for ATP formation. It consists of a core antenna complex that captures photons, and an electron transfer chain that converts photonic excitation into a charge separation. This subunit is found at the monomer-monomer interface.</text>
</comment>
<comment type="subunit">
    <text evidence="1">PSII is composed of 1 copy each of membrane proteins PsbA, PsbB, PsbC, PsbD, PsbE, PsbF, PsbH, PsbI, PsbJ, PsbK, PsbL, PsbM, PsbT, PsbX, PsbY, PsbZ, Psb30/Ycf12, at least 3 peripheral proteins of the oxygen-evolving complex and a large number of cofactors. It forms dimeric complexes.</text>
</comment>
<comment type="subcellular location">
    <subcellularLocation>
        <location evidence="1">Plastid</location>
        <location evidence="1">Chloroplast thylakoid membrane</location>
        <topology evidence="1">Single-pass membrane protein</topology>
    </subcellularLocation>
</comment>
<comment type="similarity">
    <text evidence="1">Belongs to the PsbM family.</text>
</comment>
<reference key="1">
    <citation type="journal article" date="2006" name="Mol. Biol. Evol.">
        <title>The complete chloroplast genome sequence of Pelargonium x hortorum: organization and evolution of the largest and most highly rearranged chloroplast genome of land plants.</title>
        <authorList>
            <person name="Chumley T.W."/>
            <person name="Palmer J.D."/>
            <person name="Mower J.P."/>
            <person name="Fourcade H.M."/>
            <person name="Calie P.J."/>
            <person name="Boore J.L."/>
            <person name="Jansen R.K."/>
        </authorList>
    </citation>
    <scope>NUCLEOTIDE SEQUENCE [LARGE SCALE GENOMIC DNA]</scope>
    <source>
        <strain>cv. Ringo White</strain>
    </source>
</reference>
<sequence>MEVNILAFIATALFILVPTAFLLIIYVKTVGQSDSFE</sequence>
<organism>
    <name type="scientific">Pelargonium hortorum</name>
    <name type="common">Common geranium</name>
    <name type="synonym">Pelargonium inquinans x Pelargonium zonale</name>
    <dbReference type="NCBI Taxonomy" id="4031"/>
    <lineage>
        <taxon>Eukaryota</taxon>
        <taxon>Viridiplantae</taxon>
        <taxon>Streptophyta</taxon>
        <taxon>Embryophyta</taxon>
        <taxon>Tracheophyta</taxon>
        <taxon>Spermatophyta</taxon>
        <taxon>Magnoliopsida</taxon>
        <taxon>eudicotyledons</taxon>
        <taxon>Gunneridae</taxon>
        <taxon>Pentapetalae</taxon>
        <taxon>rosids</taxon>
        <taxon>malvids</taxon>
        <taxon>Geraniales</taxon>
        <taxon>Geraniaceae</taxon>
        <taxon>Pelargonium</taxon>
    </lineage>
</organism>
<proteinExistence type="inferred from homology"/>
<dbReference type="EMBL" id="DQ897681">
    <property type="protein sequence ID" value="ABI17255.1"/>
    <property type="molecule type" value="Genomic_DNA"/>
</dbReference>
<dbReference type="RefSeq" id="YP_784064.1">
    <property type="nucleotide sequence ID" value="NC_008454.1"/>
</dbReference>
<dbReference type="SMR" id="Q06FW7"/>
<dbReference type="GeneID" id="4362775"/>
<dbReference type="GO" id="GO:0009535">
    <property type="term" value="C:chloroplast thylakoid membrane"/>
    <property type="evidence" value="ECO:0007669"/>
    <property type="project" value="UniProtKB-SubCell"/>
</dbReference>
<dbReference type="GO" id="GO:0009523">
    <property type="term" value="C:photosystem II"/>
    <property type="evidence" value="ECO:0007669"/>
    <property type="project" value="UniProtKB-KW"/>
</dbReference>
<dbReference type="GO" id="GO:0019684">
    <property type="term" value="P:photosynthesis, light reaction"/>
    <property type="evidence" value="ECO:0007669"/>
    <property type="project" value="InterPro"/>
</dbReference>
<dbReference type="HAMAP" id="MF_00438">
    <property type="entry name" value="PSII_PsbM"/>
    <property type="match status" value="1"/>
</dbReference>
<dbReference type="InterPro" id="IPR007826">
    <property type="entry name" value="PSII_PsbM"/>
</dbReference>
<dbReference type="InterPro" id="IPR037269">
    <property type="entry name" value="PSII_PsbM_sf"/>
</dbReference>
<dbReference type="NCBIfam" id="TIGR03038">
    <property type="entry name" value="PS_II_psbM"/>
    <property type="match status" value="1"/>
</dbReference>
<dbReference type="PANTHER" id="PTHR35774">
    <property type="entry name" value="PHOTOSYSTEM II REACTION CENTER PROTEIN M"/>
    <property type="match status" value="1"/>
</dbReference>
<dbReference type="PANTHER" id="PTHR35774:SF1">
    <property type="entry name" value="PHOTOSYSTEM II REACTION CENTER PROTEIN M"/>
    <property type="match status" value="1"/>
</dbReference>
<dbReference type="Pfam" id="PF05151">
    <property type="entry name" value="PsbM"/>
    <property type="match status" value="1"/>
</dbReference>
<dbReference type="SUPFAM" id="SSF161033">
    <property type="entry name" value="Photosystem II reaction center protein M, PsbM"/>
    <property type="match status" value="1"/>
</dbReference>